<protein>
    <recommendedName>
        <fullName evidence="1">Beta-ketoacyl-[acyl-carrier-protein] synthase III</fullName>
        <shortName evidence="1">Beta-ketoacyl-ACP synthase III</shortName>
        <shortName evidence="1">KAS III</shortName>
        <ecNumber evidence="1">2.3.1.180</ecNumber>
    </recommendedName>
    <alternativeName>
        <fullName evidence="1">3-oxoacyl-[acyl-carrier-protein] synthase 3</fullName>
    </alternativeName>
    <alternativeName>
        <fullName evidence="1">3-oxoacyl-[acyl-carrier-protein] synthase III</fullName>
    </alternativeName>
</protein>
<name>FABH_XANCP</name>
<reference key="1">
    <citation type="journal article" date="2002" name="Nature">
        <title>Comparison of the genomes of two Xanthomonas pathogens with differing host specificities.</title>
        <authorList>
            <person name="da Silva A.C.R."/>
            <person name="Ferro J.A."/>
            <person name="Reinach F.C."/>
            <person name="Farah C.S."/>
            <person name="Furlan L.R."/>
            <person name="Quaggio R.B."/>
            <person name="Monteiro-Vitorello C.B."/>
            <person name="Van Sluys M.A."/>
            <person name="Almeida N.F. Jr."/>
            <person name="Alves L.M.C."/>
            <person name="do Amaral A.M."/>
            <person name="Bertolini M.C."/>
            <person name="Camargo L.E.A."/>
            <person name="Camarotte G."/>
            <person name="Cannavan F."/>
            <person name="Cardozo J."/>
            <person name="Chambergo F."/>
            <person name="Ciapina L.P."/>
            <person name="Cicarelli R.M.B."/>
            <person name="Coutinho L.L."/>
            <person name="Cursino-Santos J.R."/>
            <person name="El-Dorry H."/>
            <person name="Faria J.B."/>
            <person name="Ferreira A.J.S."/>
            <person name="Ferreira R.C.C."/>
            <person name="Ferro M.I.T."/>
            <person name="Formighieri E.F."/>
            <person name="Franco M.C."/>
            <person name="Greggio C.C."/>
            <person name="Gruber A."/>
            <person name="Katsuyama A.M."/>
            <person name="Kishi L.T."/>
            <person name="Leite R.P."/>
            <person name="Lemos E.G.M."/>
            <person name="Lemos M.V.F."/>
            <person name="Locali E.C."/>
            <person name="Machado M.A."/>
            <person name="Madeira A.M.B.N."/>
            <person name="Martinez-Rossi N.M."/>
            <person name="Martins E.C."/>
            <person name="Meidanis J."/>
            <person name="Menck C.F.M."/>
            <person name="Miyaki C.Y."/>
            <person name="Moon D.H."/>
            <person name="Moreira L.M."/>
            <person name="Novo M.T.M."/>
            <person name="Okura V.K."/>
            <person name="Oliveira M.C."/>
            <person name="Oliveira V.R."/>
            <person name="Pereira H.A."/>
            <person name="Rossi A."/>
            <person name="Sena J.A.D."/>
            <person name="Silva C."/>
            <person name="de Souza R.F."/>
            <person name="Spinola L.A.F."/>
            <person name="Takita M.A."/>
            <person name="Tamura R.E."/>
            <person name="Teixeira E.C."/>
            <person name="Tezza R.I.D."/>
            <person name="Trindade dos Santos M."/>
            <person name="Truffi D."/>
            <person name="Tsai S.M."/>
            <person name="White F.F."/>
            <person name="Setubal J.C."/>
            <person name="Kitajima J.P."/>
        </authorList>
    </citation>
    <scope>NUCLEOTIDE SEQUENCE [LARGE SCALE GENOMIC DNA]</scope>
    <source>
        <strain>ATCC 33913 / DSM 3586 / NCPPB 528 / LMG 568 / P 25</strain>
    </source>
</reference>
<sequence length="325" mass="34676">MSKRIYSRIAGTGSYLPEKVLTNDDMSKIVDTSDEWIRSRTGIRERHIVADDQTTSDLAYFASLKAMEAAGVTADEIDLIVVGTTTPDLIFPSTACLLQARLGNVGCGAFDVNAACSGFVYALSVADKFVRSGDAKTVLVVGAETLTRIVDWTDRTTCVLFGDGAGAVVLKADEDTGILSTHLHADGSKKELLWDPVGVSVGFGEGKNGGGALLMKGNDVFKYAVKALDSVVDETLAANGLDTHDLDWLIPHQANLRIIEATAKRLDLPMEQVVVTVDRHGNTSSASVPLALDEAVRSGRVQRGQLLLLEAFGGGFTWGSALLRY</sequence>
<comment type="function">
    <text evidence="1">Catalyzes the condensation reaction of fatty acid synthesis by the addition to an acyl acceptor of two carbons from malonyl-ACP. Catalyzes the first condensation reaction which initiates fatty acid synthesis and may therefore play a role in governing the total rate of fatty acid production. Possesses both acetoacetyl-ACP synthase and acetyl transacylase activities. Its substrate specificity determines the biosynthesis of branched-chain and/or straight-chain of fatty acids.</text>
</comment>
<comment type="catalytic activity">
    <reaction evidence="1">
        <text>malonyl-[ACP] + acetyl-CoA + H(+) = 3-oxobutanoyl-[ACP] + CO2 + CoA</text>
        <dbReference type="Rhea" id="RHEA:12080"/>
        <dbReference type="Rhea" id="RHEA-COMP:9623"/>
        <dbReference type="Rhea" id="RHEA-COMP:9625"/>
        <dbReference type="ChEBI" id="CHEBI:15378"/>
        <dbReference type="ChEBI" id="CHEBI:16526"/>
        <dbReference type="ChEBI" id="CHEBI:57287"/>
        <dbReference type="ChEBI" id="CHEBI:57288"/>
        <dbReference type="ChEBI" id="CHEBI:78449"/>
        <dbReference type="ChEBI" id="CHEBI:78450"/>
        <dbReference type="EC" id="2.3.1.180"/>
    </reaction>
</comment>
<comment type="pathway">
    <text evidence="1">Lipid metabolism; fatty acid biosynthesis.</text>
</comment>
<comment type="subunit">
    <text evidence="1">Homodimer.</text>
</comment>
<comment type="subcellular location">
    <subcellularLocation>
        <location evidence="1">Cytoplasm</location>
    </subcellularLocation>
</comment>
<comment type="domain">
    <text evidence="1">The last Arg residue of the ACP-binding site is essential for the weak association between ACP/AcpP and FabH.</text>
</comment>
<comment type="similarity">
    <text evidence="1">Belongs to the thiolase-like superfamily. FabH family.</text>
</comment>
<feature type="chain" id="PRO_0000110512" description="Beta-ketoacyl-[acyl-carrier-protein] synthase III">
    <location>
        <begin position="1"/>
        <end position="325"/>
    </location>
</feature>
<feature type="region of interest" description="ACP-binding" evidence="1">
    <location>
        <begin position="253"/>
        <end position="257"/>
    </location>
</feature>
<feature type="active site" evidence="1">
    <location>
        <position position="116"/>
    </location>
</feature>
<feature type="active site" evidence="1">
    <location>
        <position position="252"/>
    </location>
</feature>
<feature type="active site" evidence="1">
    <location>
        <position position="282"/>
    </location>
</feature>
<proteinExistence type="inferred from homology"/>
<dbReference type="EC" id="2.3.1.180" evidence="1"/>
<dbReference type="EMBL" id="AE008922">
    <property type="protein sequence ID" value="AAM40316.1"/>
    <property type="molecule type" value="Genomic_DNA"/>
</dbReference>
<dbReference type="RefSeq" id="NP_636392.1">
    <property type="nucleotide sequence ID" value="NC_003902.1"/>
</dbReference>
<dbReference type="RefSeq" id="WP_011036218.1">
    <property type="nucleotide sequence ID" value="NC_003902.1"/>
</dbReference>
<dbReference type="SMR" id="Q8PBV1"/>
<dbReference type="STRING" id="190485.XCC1016"/>
<dbReference type="EnsemblBacteria" id="AAM40316">
    <property type="protein sequence ID" value="AAM40316"/>
    <property type="gene ID" value="XCC1016"/>
</dbReference>
<dbReference type="KEGG" id="xcc:XCC1016"/>
<dbReference type="PATRIC" id="fig|190485.4.peg.1081"/>
<dbReference type="eggNOG" id="COG0332">
    <property type="taxonomic scope" value="Bacteria"/>
</dbReference>
<dbReference type="HOGENOM" id="CLU_039592_3_1_6"/>
<dbReference type="OrthoDB" id="9815506at2"/>
<dbReference type="UniPathway" id="UPA00094"/>
<dbReference type="Proteomes" id="UP000001010">
    <property type="component" value="Chromosome"/>
</dbReference>
<dbReference type="GO" id="GO:0005737">
    <property type="term" value="C:cytoplasm"/>
    <property type="evidence" value="ECO:0007669"/>
    <property type="project" value="UniProtKB-SubCell"/>
</dbReference>
<dbReference type="GO" id="GO:0004315">
    <property type="term" value="F:3-oxoacyl-[acyl-carrier-protein] synthase activity"/>
    <property type="evidence" value="ECO:0007669"/>
    <property type="project" value="InterPro"/>
</dbReference>
<dbReference type="GO" id="GO:0033818">
    <property type="term" value="F:beta-ketoacyl-acyl-carrier-protein synthase III activity"/>
    <property type="evidence" value="ECO:0007669"/>
    <property type="project" value="UniProtKB-UniRule"/>
</dbReference>
<dbReference type="GO" id="GO:0006633">
    <property type="term" value="P:fatty acid biosynthetic process"/>
    <property type="evidence" value="ECO:0007669"/>
    <property type="project" value="UniProtKB-UniRule"/>
</dbReference>
<dbReference type="CDD" id="cd00830">
    <property type="entry name" value="KAS_III"/>
    <property type="match status" value="1"/>
</dbReference>
<dbReference type="FunFam" id="3.40.47.10:FF:000004">
    <property type="entry name" value="3-oxoacyl-[acyl-carrier-protein] synthase 3"/>
    <property type="match status" value="1"/>
</dbReference>
<dbReference type="Gene3D" id="3.40.47.10">
    <property type="match status" value="1"/>
</dbReference>
<dbReference type="HAMAP" id="MF_01815">
    <property type="entry name" value="FabH"/>
    <property type="match status" value="1"/>
</dbReference>
<dbReference type="InterPro" id="IPR013747">
    <property type="entry name" value="ACP_syn_III_C"/>
</dbReference>
<dbReference type="InterPro" id="IPR013751">
    <property type="entry name" value="ACP_syn_III_N"/>
</dbReference>
<dbReference type="InterPro" id="IPR004655">
    <property type="entry name" value="FabH"/>
</dbReference>
<dbReference type="InterPro" id="IPR016039">
    <property type="entry name" value="Thiolase-like"/>
</dbReference>
<dbReference type="NCBIfam" id="TIGR00747">
    <property type="entry name" value="fabH"/>
    <property type="match status" value="1"/>
</dbReference>
<dbReference type="NCBIfam" id="NF006829">
    <property type="entry name" value="PRK09352.1"/>
    <property type="match status" value="1"/>
</dbReference>
<dbReference type="PANTHER" id="PTHR43091">
    <property type="entry name" value="3-OXOACYL-[ACYL-CARRIER-PROTEIN] SYNTHASE"/>
    <property type="match status" value="1"/>
</dbReference>
<dbReference type="PANTHER" id="PTHR43091:SF1">
    <property type="entry name" value="BETA-KETOACYL-[ACYL-CARRIER-PROTEIN] SYNTHASE III, CHLOROPLASTIC"/>
    <property type="match status" value="1"/>
</dbReference>
<dbReference type="Pfam" id="PF08545">
    <property type="entry name" value="ACP_syn_III"/>
    <property type="match status" value="1"/>
</dbReference>
<dbReference type="Pfam" id="PF08541">
    <property type="entry name" value="ACP_syn_III_C"/>
    <property type="match status" value="1"/>
</dbReference>
<dbReference type="SUPFAM" id="SSF53901">
    <property type="entry name" value="Thiolase-like"/>
    <property type="match status" value="1"/>
</dbReference>
<evidence type="ECO:0000255" key="1">
    <source>
        <dbReference type="HAMAP-Rule" id="MF_01815"/>
    </source>
</evidence>
<gene>
    <name evidence="1" type="primary">fabH</name>
    <name type="ordered locus">XCC1016</name>
</gene>
<keyword id="KW-0012">Acyltransferase</keyword>
<keyword id="KW-0963">Cytoplasm</keyword>
<keyword id="KW-0275">Fatty acid biosynthesis</keyword>
<keyword id="KW-0276">Fatty acid metabolism</keyword>
<keyword id="KW-0444">Lipid biosynthesis</keyword>
<keyword id="KW-0443">Lipid metabolism</keyword>
<keyword id="KW-0511">Multifunctional enzyme</keyword>
<keyword id="KW-1185">Reference proteome</keyword>
<keyword id="KW-0808">Transferase</keyword>
<organism>
    <name type="scientific">Xanthomonas campestris pv. campestris (strain ATCC 33913 / DSM 3586 / NCPPB 528 / LMG 568 / P 25)</name>
    <dbReference type="NCBI Taxonomy" id="190485"/>
    <lineage>
        <taxon>Bacteria</taxon>
        <taxon>Pseudomonadati</taxon>
        <taxon>Pseudomonadota</taxon>
        <taxon>Gammaproteobacteria</taxon>
        <taxon>Lysobacterales</taxon>
        <taxon>Lysobacteraceae</taxon>
        <taxon>Xanthomonas</taxon>
    </lineage>
</organism>
<accession>Q8PBV1</accession>